<evidence type="ECO:0000255" key="1"/>
<protein>
    <recommendedName>
        <fullName>Uncharacterized protein YckD</fullName>
    </recommendedName>
    <alternativeName>
        <fullName>ORF4</fullName>
    </alternativeName>
</protein>
<accession>P42402</accession>
<reference key="1">
    <citation type="journal article" date="1995" name="Microbiology">
        <title>A 10 kb nucleotide sequence at the 5' flanking region (32 degrees) of srfAA of the Bacillus subtilis chromosome.</title>
        <authorList>
            <person name="Fujishima Y."/>
            <person name="Yamane K."/>
        </authorList>
    </citation>
    <scope>NUCLEOTIDE SEQUENCE [GENOMIC DNA]</scope>
    <source>
        <strain>168</strain>
    </source>
</reference>
<reference key="2">
    <citation type="journal article" date="1996" name="Microbiology">
        <title>The 25 degrees-36 degrees region of the Bacillus subtilis chromosome: determination of the sequence of a 146 kb segment and identification of 113 genes.</title>
        <authorList>
            <person name="Yamane K."/>
            <person name="Kumano M."/>
            <person name="Kurita K."/>
        </authorList>
    </citation>
    <scope>NUCLEOTIDE SEQUENCE [GENOMIC DNA]</scope>
    <source>
        <strain>168</strain>
    </source>
</reference>
<reference key="3">
    <citation type="journal article" date="1997" name="Nature">
        <title>The complete genome sequence of the Gram-positive bacterium Bacillus subtilis.</title>
        <authorList>
            <person name="Kunst F."/>
            <person name="Ogasawara N."/>
            <person name="Moszer I."/>
            <person name="Albertini A.M."/>
            <person name="Alloni G."/>
            <person name="Azevedo V."/>
            <person name="Bertero M.G."/>
            <person name="Bessieres P."/>
            <person name="Bolotin A."/>
            <person name="Borchert S."/>
            <person name="Borriss R."/>
            <person name="Boursier L."/>
            <person name="Brans A."/>
            <person name="Braun M."/>
            <person name="Brignell S.C."/>
            <person name="Bron S."/>
            <person name="Brouillet S."/>
            <person name="Bruschi C.V."/>
            <person name="Caldwell B."/>
            <person name="Capuano V."/>
            <person name="Carter N.M."/>
            <person name="Choi S.-K."/>
            <person name="Codani J.-J."/>
            <person name="Connerton I.F."/>
            <person name="Cummings N.J."/>
            <person name="Daniel R.A."/>
            <person name="Denizot F."/>
            <person name="Devine K.M."/>
            <person name="Duesterhoeft A."/>
            <person name="Ehrlich S.D."/>
            <person name="Emmerson P.T."/>
            <person name="Entian K.-D."/>
            <person name="Errington J."/>
            <person name="Fabret C."/>
            <person name="Ferrari E."/>
            <person name="Foulger D."/>
            <person name="Fritz C."/>
            <person name="Fujita M."/>
            <person name="Fujita Y."/>
            <person name="Fuma S."/>
            <person name="Galizzi A."/>
            <person name="Galleron N."/>
            <person name="Ghim S.-Y."/>
            <person name="Glaser P."/>
            <person name="Goffeau A."/>
            <person name="Golightly E.J."/>
            <person name="Grandi G."/>
            <person name="Guiseppi G."/>
            <person name="Guy B.J."/>
            <person name="Haga K."/>
            <person name="Haiech J."/>
            <person name="Harwood C.R."/>
            <person name="Henaut A."/>
            <person name="Hilbert H."/>
            <person name="Holsappel S."/>
            <person name="Hosono S."/>
            <person name="Hullo M.-F."/>
            <person name="Itaya M."/>
            <person name="Jones L.-M."/>
            <person name="Joris B."/>
            <person name="Karamata D."/>
            <person name="Kasahara Y."/>
            <person name="Klaerr-Blanchard M."/>
            <person name="Klein C."/>
            <person name="Kobayashi Y."/>
            <person name="Koetter P."/>
            <person name="Koningstein G."/>
            <person name="Krogh S."/>
            <person name="Kumano M."/>
            <person name="Kurita K."/>
            <person name="Lapidus A."/>
            <person name="Lardinois S."/>
            <person name="Lauber J."/>
            <person name="Lazarevic V."/>
            <person name="Lee S.-M."/>
            <person name="Levine A."/>
            <person name="Liu H."/>
            <person name="Masuda S."/>
            <person name="Mauel C."/>
            <person name="Medigue C."/>
            <person name="Medina N."/>
            <person name="Mellado R.P."/>
            <person name="Mizuno M."/>
            <person name="Moestl D."/>
            <person name="Nakai S."/>
            <person name="Noback M."/>
            <person name="Noone D."/>
            <person name="O'Reilly M."/>
            <person name="Ogawa K."/>
            <person name="Ogiwara A."/>
            <person name="Oudega B."/>
            <person name="Park S.-H."/>
            <person name="Parro V."/>
            <person name="Pohl T.M."/>
            <person name="Portetelle D."/>
            <person name="Porwollik S."/>
            <person name="Prescott A.M."/>
            <person name="Presecan E."/>
            <person name="Pujic P."/>
            <person name="Purnelle B."/>
            <person name="Rapoport G."/>
            <person name="Rey M."/>
            <person name="Reynolds S."/>
            <person name="Rieger M."/>
            <person name="Rivolta C."/>
            <person name="Rocha E."/>
            <person name="Roche B."/>
            <person name="Rose M."/>
            <person name="Sadaie Y."/>
            <person name="Sato T."/>
            <person name="Scanlan E."/>
            <person name="Schleich S."/>
            <person name="Schroeter R."/>
            <person name="Scoffone F."/>
            <person name="Sekiguchi J."/>
            <person name="Sekowska A."/>
            <person name="Seror S.J."/>
            <person name="Serror P."/>
            <person name="Shin B.-S."/>
            <person name="Soldo B."/>
            <person name="Sorokin A."/>
            <person name="Tacconi E."/>
            <person name="Takagi T."/>
            <person name="Takahashi H."/>
            <person name="Takemaru K."/>
            <person name="Takeuchi M."/>
            <person name="Tamakoshi A."/>
            <person name="Tanaka T."/>
            <person name="Terpstra P."/>
            <person name="Tognoni A."/>
            <person name="Tosato V."/>
            <person name="Uchiyama S."/>
            <person name="Vandenbol M."/>
            <person name="Vannier F."/>
            <person name="Vassarotti A."/>
            <person name="Viari A."/>
            <person name="Wambutt R."/>
            <person name="Wedler E."/>
            <person name="Wedler H."/>
            <person name="Weitzenegger T."/>
            <person name="Winters P."/>
            <person name="Wipat A."/>
            <person name="Yamamoto H."/>
            <person name="Yamane K."/>
            <person name="Yasumoto K."/>
            <person name="Yata K."/>
            <person name="Yoshida K."/>
            <person name="Yoshikawa H.-F."/>
            <person name="Zumstein E."/>
            <person name="Yoshikawa H."/>
            <person name="Danchin A."/>
        </authorList>
    </citation>
    <scope>NUCLEOTIDE SEQUENCE [LARGE SCALE GENOMIC DNA]</scope>
    <source>
        <strain>168</strain>
    </source>
</reference>
<organism>
    <name type="scientific">Bacillus subtilis (strain 168)</name>
    <dbReference type="NCBI Taxonomy" id="224308"/>
    <lineage>
        <taxon>Bacteria</taxon>
        <taxon>Bacillati</taxon>
        <taxon>Bacillota</taxon>
        <taxon>Bacilli</taxon>
        <taxon>Bacillales</taxon>
        <taxon>Bacillaceae</taxon>
        <taxon>Bacillus</taxon>
    </lineage>
</organism>
<dbReference type="EMBL" id="D30762">
    <property type="protein sequence ID" value="BAA06428.1"/>
    <property type="molecule type" value="Genomic_DNA"/>
</dbReference>
<dbReference type="EMBL" id="D50453">
    <property type="protein sequence ID" value="BAA08974.1"/>
    <property type="molecule type" value="Genomic_DNA"/>
</dbReference>
<dbReference type="EMBL" id="AL009126">
    <property type="protein sequence ID" value="CAB12134.1"/>
    <property type="molecule type" value="Genomic_DNA"/>
</dbReference>
<dbReference type="PIR" id="F69760">
    <property type="entry name" value="F69760"/>
</dbReference>
<dbReference type="RefSeq" id="NP_388222.1">
    <property type="nucleotide sequence ID" value="NC_000964.3"/>
</dbReference>
<dbReference type="RefSeq" id="WP_003246247.1">
    <property type="nucleotide sequence ID" value="NZ_OZ025638.1"/>
</dbReference>
<dbReference type="SMR" id="P42402"/>
<dbReference type="FunCoup" id="P42402">
    <property type="interactions" value="18"/>
</dbReference>
<dbReference type="STRING" id="224308.BSU03400"/>
<dbReference type="PaxDb" id="224308-BSU03400"/>
<dbReference type="DNASU" id="938319"/>
<dbReference type="EnsemblBacteria" id="CAB12134">
    <property type="protein sequence ID" value="CAB12134"/>
    <property type="gene ID" value="BSU_03400"/>
</dbReference>
<dbReference type="GeneID" id="938319"/>
<dbReference type="KEGG" id="bsu:BSU03400"/>
<dbReference type="PATRIC" id="fig|224308.179.peg.357"/>
<dbReference type="eggNOG" id="ENOG502ZBXS">
    <property type="taxonomic scope" value="Bacteria"/>
</dbReference>
<dbReference type="InParanoid" id="P42402"/>
<dbReference type="OrthoDB" id="2883543at2"/>
<dbReference type="BioCyc" id="BSUB:BSU03400-MONOMER"/>
<dbReference type="Proteomes" id="UP000001570">
    <property type="component" value="Chromosome"/>
</dbReference>
<dbReference type="InterPro" id="IPR024485">
    <property type="entry name" value="DUF2680"/>
</dbReference>
<dbReference type="Pfam" id="PF10925">
    <property type="entry name" value="DUF2680"/>
    <property type="match status" value="1"/>
</dbReference>
<sequence>MKRITINIITMFIAAAVISLTGTAEAAEKQQQSPANVTLTDQQKKEIEQLEAEILKKRKDVISKYVQYGILPKERGEHIKNHLDKHFEMMKQNGFVPKHHPHPHKFEKRH</sequence>
<keyword id="KW-1185">Reference proteome</keyword>
<keyword id="KW-0732">Signal</keyword>
<name>YCKD_BACSU</name>
<gene>
    <name type="primary">yckD</name>
    <name type="ordered locus">BSU03400</name>
</gene>
<proteinExistence type="inferred from homology"/>
<feature type="signal peptide" evidence="1">
    <location>
        <begin position="1"/>
        <end position="23"/>
    </location>
</feature>
<feature type="chain" id="PRO_0000013692" description="Uncharacterized protein YckD">
    <location>
        <begin position="24"/>
        <end position="110"/>
    </location>
</feature>